<gene>
    <name evidence="1" type="primary">clpP</name>
    <name type="ordered locus">SE_0551</name>
</gene>
<accession>Q8CTE0</accession>
<dbReference type="EC" id="3.4.21.92" evidence="1"/>
<dbReference type="EMBL" id="AE015929">
    <property type="protein sequence ID" value="AAO04148.1"/>
    <property type="molecule type" value="Genomic_DNA"/>
</dbReference>
<dbReference type="RefSeq" id="NP_764106.1">
    <property type="nucleotide sequence ID" value="NC_004461.1"/>
</dbReference>
<dbReference type="RefSeq" id="WP_001829659.1">
    <property type="nucleotide sequence ID" value="NZ_WBME01000030.1"/>
</dbReference>
<dbReference type="SMR" id="Q8CTE0"/>
<dbReference type="MEROPS" id="S14.001"/>
<dbReference type="GeneID" id="50019301"/>
<dbReference type="KEGG" id="sep:SE_0551"/>
<dbReference type="PATRIC" id="fig|176280.10.peg.522"/>
<dbReference type="eggNOG" id="COG0740">
    <property type="taxonomic scope" value="Bacteria"/>
</dbReference>
<dbReference type="HOGENOM" id="CLU_058707_3_2_9"/>
<dbReference type="OrthoDB" id="9802800at2"/>
<dbReference type="Proteomes" id="UP000001411">
    <property type="component" value="Chromosome"/>
</dbReference>
<dbReference type="GO" id="GO:0005737">
    <property type="term" value="C:cytoplasm"/>
    <property type="evidence" value="ECO:0007669"/>
    <property type="project" value="UniProtKB-SubCell"/>
</dbReference>
<dbReference type="GO" id="GO:0009368">
    <property type="term" value="C:endopeptidase Clp complex"/>
    <property type="evidence" value="ECO:0007669"/>
    <property type="project" value="TreeGrafter"/>
</dbReference>
<dbReference type="GO" id="GO:0004176">
    <property type="term" value="F:ATP-dependent peptidase activity"/>
    <property type="evidence" value="ECO:0007669"/>
    <property type="project" value="InterPro"/>
</dbReference>
<dbReference type="GO" id="GO:0051117">
    <property type="term" value="F:ATPase binding"/>
    <property type="evidence" value="ECO:0007669"/>
    <property type="project" value="TreeGrafter"/>
</dbReference>
<dbReference type="GO" id="GO:0004252">
    <property type="term" value="F:serine-type endopeptidase activity"/>
    <property type="evidence" value="ECO:0007669"/>
    <property type="project" value="UniProtKB-UniRule"/>
</dbReference>
<dbReference type="GO" id="GO:0006515">
    <property type="term" value="P:protein quality control for misfolded or incompletely synthesized proteins"/>
    <property type="evidence" value="ECO:0007669"/>
    <property type="project" value="TreeGrafter"/>
</dbReference>
<dbReference type="CDD" id="cd07017">
    <property type="entry name" value="S14_ClpP_2"/>
    <property type="match status" value="1"/>
</dbReference>
<dbReference type="FunFam" id="3.90.226.10:FF:000001">
    <property type="entry name" value="ATP-dependent Clp protease proteolytic subunit"/>
    <property type="match status" value="1"/>
</dbReference>
<dbReference type="Gene3D" id="3.90.226.10">
    <property type="entry name" value="2-enoyl-CoA Hydratase, Chain A, domain 1"/>
    <property type="match status" value="1"/>
</dbReference>
<dbReference type="HAMAP" id="MF_00444">
    <property type="entry name" value="ClpP"/>
    <property type="match status" value="1"/>
</dbReference>
<dbReference type="InterPro" id="IPR001907">
    <property type="entry name" value="ClpP"/>
</dbReference>
<dbReference type="InterPro" id="IPR029045">
    <property type="entry name" value="ClpP/crotonase-like_dom_sf"/>
</dbReference>
<dbReference type="InterPro" id="IPR023562">
    <property type="entry name" value="ClpP/TepA"/>
</dbReference>
<dbReference type="InterPro" id="IPR033135">
    <property type="entry name" value="ClpP_His_AS"/>
</dbReference>
<dbReference type="InterPro" id="IPR018215">
    <property type="entry name" value="ClpP_Ser_AS"/>
</dbReference>
<dbReference type="NCBIfam" id="TIGR00493">
    <property type="entry name" value="clpP"/>
    <property type="match status" value="1"/>
</dbReference>
<dbReference type="NCBIfam" id="NF001368">
    <property type="entry name" value="PRK00277.1"/>
    <property type="match status" value="1"/>
</dbReference>
<dbReference type="NCBIfam" id="NF009205">
    <property type="entry name" value="PRK12553.1"/>
    <property type="match status" value="1"/>
</dbReference>
<dbReference type="PANTHER" id="PTHR10381">
    <property type="entry name" value="ATP-DEPENDENT CLP PROTEASE PROTEOLYTIC SUBUNIT"/>
    <property type="match status" value="1"/>
</dbReference>
<dbReference type="PANTHER" id="PTHR10381:SF70">
    <property type="entry name" value="ATP-DEPENDENT CLP PROTEASE PROTEOLYTIC SUBUNIT"/>
    <property type="match status" value="1"/>
</dbReference>
<dbReference type="Pfam" id="PF00574">
    <property type="entry name" value="CLP_protease"/>
    <property type="match status" value="1"/>
</dbReference>
<dbReference type="PRINTS" id="PR00127">
    <property type="entry name" value="CLPPROTEASEP"/>
</dbReference>
<dbReference type="SUPFAM" id="SSF52096">
    <property type="entry name" value="ClpP/crotonase"/>
    <property type="match status" value="1"/>
</dbReference>
<dbReference type="PROSITE" id="PS00382">
    <property type="entry name" value="CLP_PROTEASE_HIS"/>
    <property type="match status" value="1"/>
</dbReference>
<dbReference type="PROSITE" id="PS00381">
    <property type="entry name" value="CLP_PROTEASE_SER"/>
    <property type="match status" value="1"/>
</dbReference>
<evidence type="ECO:0000255" key="1">
    <source>
        <dbReference type="HAMAP-Rule" id="MF_00444"/>
    </source>
</evidence>
<reference key="1">
    <citation type="journal article" date="2003" name="Mol. Microbiol.">
        <title>Genome-based analysis of virulence genes in a non-biofilm-forming Staphylococcus epidermidis strain (ATCC 12228).</title>
        <authorList>
            <person name="Zhang Y.-Q."/>
            <person name="Ren S.-X."/>
            <person name="Li H.-L."/>
            <person name="Wang Y.-X."/>
            <person name="Fu G."/>
            <person name="Yang J."/>
            <person name="Qin Z.-Q."/>
            <person name="Miao Y.-G."/>
            <person name="Wang W.-Y."/>
            <person name="Chen R.-S."/>
            <person name="Shen Y."/>
            <person name="Chen Z."/>
            <person name="Yuan Z.-H."/>
            <person name="Zhao G.-P."/>
            <person name="Qu D."/>
            <person name="Danchin A."/>
            <person name="Wen Y.-M."/>
        </authorList>
    </citation>
    <scope>NUCLEOTIDE SEQUENCE [LARGE SCALE GENOMIC DNA]</scope>
    <source>
        <strain>ATCC 12228 / FDA PCI 1200</strain>
    </source>
</reference>
<proteinExistence type="inferred from homology"/>
<organism>
    <name type="scientific">Staphylococcus epidermidis (strain ATCC 12228 / FDA PCI 1200)</name>
    <dbReference type="NCBI Taxonomy" id="176280"/>
    <lineage>
        <taxon>Bacteria</taxon>
        <taxon>Bacillati</taxon>
        <taxon>Bacillota</taxon>
        <taxon>Bacilli</taxon>
        <taxon>Bacillales</taxon>
        <taxon>Staphylococcaceae</taxon>
        <taxon>Staphylococcus</taxon>
    </lineage>
</organism>
<keyword id="KW-0963">Cytoplasm</keyword>
<keyword id="KW-0378">Hydrolase</keyword>
<keyword id="KW-0645">Protease</keyword>
<keyword id="KW-0720">Serine protease</keyword>
<name>CLPP_STAES</name>
<sequence length="194" mass="21384">MNLIPTVIETTNRGERAYDIYSRLLKDRIIMLGSQIDDNVANSIVSQLLFLQAQDSEKDIYLYINSPGGSVTAGFAIYDTIQHIKPDVQTICIGMAASMGSFLLAAGAKGKRFALPNAEVMIHQPLGGAQGQATEIEIAANHILKTREKLNRILSERTGQSIEKIQQDTDRDNFLTAAEAKEYGLIDEVMEPEK</sequence>
<comment type="function">
    <text evidence="1">Cleaves peptides in various proteins in a process that requires ATP hydrolysis. Has a chymotrypsin-like activity. Plays a major role in the degradation of misfolded proteins.</text>
</comment>
<comment type="catalytic activity">
    <reaction evidence="1">
        <text>Hydrolysis of proteins to small peptides in the presence of ATP and magnesium. alpha-casein is the usual test substrate. In the absence of ATP, only oligopeptides shorter than five residues are hydrolyzed (such as succinyl-Leu-Tyr-|-NHMec, and Leu-Tyr-Leu-|-Tyr-Trp, in which cleavage of the -Tyr-|-Leu- and -Tyr-|-Trp bonds also occurs).</text>
        <dbReference type="EC" id="3.4.21.92"/>
    </reaction>
</comment>
<comment type="subunit">
    <text evidence="1">Fourteen ClpP subunits assemble into 2 heptameric rings which stack back to back to give a disk-like structure with a central cavity, resembling the structure of eukaryotic proteasomes.</text>
</comment>
<comment type="subcellular location">
    <subcellularLocation>
        <location evidence="1">Cytoplasm</location>
    </subcellularLocation>
</comment>
<comment type="similarity">
    <text evidence="1">Belongs to the peptidase S14 family.</text>
</comment>
<feature type="chain" id="PRO_0000179655" description="ATP-dependent Clp protease proteolytic subunit">
    <location>
        <begin position="1"/>
        <end position="194"/>
    </location>
</feature>
<feature type="active site" description="Nucleophile" evidence="1">
    <location>
        <position position="98"/>
    </location>
</feature>
<feature type="active site" evidence="1">
    <location>
        <position position="123"/>
    </location>
</feature>
<protein>
    <recommendedName>
        <fullName evidence="1">ATP-dependent Clp protease proteolytic subunit</fullName>
        <ecNumber evidence="1">3.4.21.92</ecNumber>
    </recommendedName>
    <alternativeName>
        <fullName evidence="1">Endopeptidase Clp</fullName>
    </alternativeName>
</protein>